<feature type="signal peptide" evidence="2">
    <location>
        <begin position="1"/>
        <end position="22"/>
    </location>
</feature>
<feature type="chain" id="PRO_5002105594" description="Immunoglobulin kappa variable 1D-13" evidence="2">
    <location>
        <begin position="23"/>
        <end position="117"/>
    </location>
</feature>
<feature type="domain" description="Ig-like" evidence="3">
    <location>
        <begin position="23"/>
        <end position="117" status="greater than"/>
    </location>
</feature>
<feature type="region of interest" description="Framework-1" evidence="1">
    <location>
        <begin position="23"/>
        <end position="45"/>
    </location>
</feature>
<feature type="region of interest" description="Complementarity-determining-1" evidence="1">
    <location>
        <begin position="46"/>
        <end position="56"/>
    </location>
</feature>
<feature type="region of interest" description="Framework-2" evidence="1">
    <location>
        <begin position="57"/>
        <end position="71"/>
    </location>
</feature>
<feature type="region of interest" description="Complementarity-determining-2" evidence="1">
    <location>
        <begin position="72"/>
        <end position="78"/>
    </location>
</feature>
<feature type="region of interest" description="Framework-3" evidence="1">
    <location>
        <begin position="79"/>
        <end position="110"/>
    </location>
</feature>
<feature type="region of interest" description="Complementarity-determining-3" evidence="1">
    <location>
        <begin position="111"/>
        <end position="117" status="greater than"/>
    </location>
</feature>
<feature type="disulfide bond" evidence="3">
    <location>
        <begin position="45"/>
        <end position="110"/>
    </location>
</feature>
<feature type="non-terminal residue">
    <location>
        <position position="117"/>
    </location>
</feature>
<proteinExistence type="inferred from homology"/>
<evidence type="ECO:0000250" key="1">
    <source>
        <dbReference type="UniProtKB" id="P01602"/>
    </source>
</evidence>
<evidence type="ECO:0000255" key="2"/>
<evidence type="ECO:0000255" key="3">
    <source>
        <dbReference type="PROSITE-ProRule" id="PRU00114"/>
    </source>
</evidence>
<evidence type="ECO:0000303" key="4">
    <source>
    </source>
</evidence>
<evidence type="ECO:0000303" key="5">
    <source>
    </source>
</evidence>
<evidence type="ECO:0000303" key="6">
    <source>
    </source>
</evidence>
<evidence type="ECO:0000303" key="7">
    <source>
    </source>
</evidence>
<evidence type="ECO:0000303" key="8">
    <source>
    </source>
</evidence>
<evidence type="ECO:0000303" key="9">
    <source ref="3"/>
</evidence>
<evidence type="ECO:0000305" key="10"/>
<accession>A0A0B4J2D9</accession>
<comment type="function">
    <text evidence="5 6 7 8">V region of the variable domain of immunoglobulin light chains that participates in the antigen recognition (PubMed:24600447). Immunoglobulins, also known as antibodies, are membrane-bound or secreted glycoproteins produced by B lymphocytes. In the recognition phase of humoral immunity, the membrane-bound immunoglobulins serve as receptors which, upon binding of a specific antigen, trigger the clonal expansion and differentiation of B lymphocytes into immunoglobulins-secreting plasma cells. Secreted immunoglobulins mediate the effector phase of humoral immunity, which results in the elimination of bound antigens (PubMed:20176268, PubMed:22158414). The antigen binding site is formed by the variable domain of one heavy chain, together with that of its associated light chain. Thus, each immunoglobulin has two antigen binding sites with remarkable affinity for a particular antigen. The variable domains are assembled by a process called V-(D)-J rearrangement and can then be subjected to somatic hypermutations which, after exposure to antigen and selection, allow affinity maturation for a particular antigen (PubMed:17576170, PubMed:20176268).</text>
</comment>
<comment type="subunit">
    <text evidence="6">Immunoglobulins are composed of two identical heavy chains and two identical light chains; disulfide-linked.</text>
</comment>
<comment type="subcellular location">
    <subcellularLocation>
        <location evidence="6 7">Secreted</location>
    </subcellularLocation>
    <subcellularLocation>
        <location evidence="6 7">Cell membrane</location>
    </subcellularLocation>
</comment>
<comment type="polymorphism">
    <text>There are several alleles. The sequence shown is that of IMGT allele IGKV1D-13*02.</text>
</comment>
<comment type="caution">
    <text evidence="10">For an example of a full-length immunoglobulin kappa light chain see AC P0DOX7.</text>
</comment>
<sequence>MDMRVPAQLLGLLLLWLPGARCAIQLTQSPSSLSASVGDRVTITCRASQGISSALAWYQQKPGKAPKLLIYDASSLESGVPSRFSGSGSGTDFTLTISSLQPEDFATYYCQQFNSYP</sequence>
<dbReference type="EMBL" id="AC243981">
    <property type="status" value="NOT_ANNOTATED_CDS"/>
    <property type="molecule type" value="Genomic_DNA"/>
</dbReference>
<dbReference type="EMDB" id="EMD-41606"/>
<dbReference type="EMDB" id="EMD-41608"/>
<dbReference type="EMDB" id="EMD-44595"/>
<dbReference type="EMDB" id="EMD-60281"/>
<dbReference type="SMR" id="A0A0B4J2D9"/>
<dbReference type="FunCoup" id="A0A0B4J2D9">
    <property type="interactions" value="540"/>
</dbReference>
<dbReference type="IntAct" id="A0A0B4J2D9">
    <property type="interactions" value="3"/>
</dbReference>
<dbReference type="MINT" id="A0A0B4J2D9"/>
<dbReference type="IMGT_GENE-DB" id="IGKV1D-13"/>
<dbReference type="BioMuta" id="IGKV1D-13"/>
<dbReference type="jPOST" id="A0A0B4J2D9"/>
<dbReference type="MassIVE" id="A0A0B4J2D9"/>
<dbReference type="Ensembl" id="ENST00000611391.1">
    <property type="protein sequence ID" value="ENSP00000480959.1"/>
    <property type="gene ID" value="ENSG00000276566.1"/>
</dbReference>
<dbReference type="AGR" id="HGNC:5747"/>
<dbReference type="GeneCards" id="IGKV1D-13"/>
<dbReference type="HGNC" id="HGNC:5747">
    <property type="gene designation" value="IGKV1D-13"/>
</dbReference>
<dbReference type="HPA" id="ENSG00000276566">
    <property type="expression patterns" value="Group enriched (intestine, lymphoid tissue)"/>
</dbReference>
<dbReference type="neXtProt" id="NX_A0A0B4J2D9"/>
<dbReference type="OpenTargets" id="ENSG00000276566"/>
<dbReference type="VEuPathDB" id="HostDB:ENSG00000276566"/>
<dbReference type="HOGENOM" id="CLU_077975_4_1_1"/>
<dbReference type="InParanoid" id="A0A0B4J2D9"/>
<dbReference type="OMA" id="IVAINCQ"/>
<dbReference type="OrthoDB" id="9629570at2759"/>
<dbReference type="PAN-GO" id="A0A0B4J2D9">
    <property type="GO annotations" value="3 GO annotations based on evolutionary models"/>
</dbReference>
<dbReference type="Pharos" id="A0A0B4J2D9">
    <property type="development level" value="Tdark"/>
</dbReference>
<dbReference type="PRO" id="PR:A0A0B4J2D9"/>
<dbReference type="Proteomes" id="UP000005640">
    <property type="component" value="Chromosome 2"/>
</dbReference>
<dbReference type="RNAct" id="A0A0B4J2D9">
    <property type="molecule type" value="protein"/>
</dbReference>
<dbReference type="Bgee" id="ENSG00000276566">
    <property type="expression patterns" value="Expressed in mucosa of transverse colon and 84 other cell types or tissues"/>
</dbReference>
<dbReference type="ExpressionAtlas" id="A0A0B4J2D9">
    <property type="expression patterns" value="baseline and differential"/>
</dbReference>
<dbReference type="GO" id="GO:0005576">
    <property type="term" value="C:extracellular region"/>
    <property type="evidence" value="ECO:0007669"/>
    <property type="project" value="UniProtKB-SubCell"/>
</dbReference>
<dbReference type="GO" id="GO:0019814">
    <property type="term" value="C:immunoglobulin complex"/>
    <property type="evidence" value="ECO:0000318"/>
    <property type="project" value="GO_Central"/>
</dbReference>
<dbReference type="GO" id="GO:0005886">
    <property type="term" value="C:plasma membrane"/>
    <property type="evidence" value="ECO:0007669"/>
    <property type="project" value="UniProtKB-SubCell"/>
</dbReference>
<dbReference type="GO" id="GO:0002250">
    <property type="term" value="P:adaptive immune response"/>
    <property type="evidence" value="ECO:0007669"/>
    <property type="project" value="UniProtKB-KW"/>
</dbReference>
<dbReference type="GO" id="GO:0006955">
    <property type="term" value="P:immune response"/>
    <property type="evidence" value="ECO:0000318"/>
    <property type="project" value="GO_Central"/>
</dbReference>
<dbReference type="CDD" id="cd04980">
    <property type="entry name" value="IgV_L_kappa"/>
    <property type="match status" value="1"/>
</dbReference>
<dbReference type="FunFam" id="2.60.40.10:FF:000212">
    <property type="entry name" value="Immunoglobulin kappa chain variable 12-38"/>
    <property type="match status" value="1"/>
</dbReference>
<dbReference type="Gene3D" id="2.60.40.10">
    <property type="entry name" value="Immunoglobulins"/>
    <property type="match status" value="1"/>
</dbReference>
<dbReference type="InterPro" id="IPR007110">
    <property type="entry name" value="Ig-like_dom"/>
</dbReference>
<dbReference type="InterPro" id="IPR036179">
    <property type="entry name" value="Ig-like_dom_sf"/>
</dbReference>
<dbReference type="InterPro" id="IPR013783">
    <property type="entry name" value="Ig-like_fold"/>
</dbReference>
<dbReference type="InterPro" id="IPR003599">
    <property type="entry name" value="Ig_sub"/>
</dbReference>
<dbReference type="InterPro" id="IPR013106">
    <property type="entry name" value="Ig_V-set"/>
</dbReference>
<dbReference type="InterPro" id="IPR050150">
    <property type="entry name" value="IgV_Light_Chain"/>
</dbReference>
<dbReference type="PANTHER" id="PTHR23267">
    <property type="entry name" value="IMMUNOGLOBULIN LIGHT CHAIN"/>
    <property type="match status" value="1"/>
</dbReference>
<dbReference type="Pfam" id="PF07686">
    <property type="entry name" value="V-set"/>
    <property type="match status" value="1"/>
</dbReference>
<dbReference type="SMART" id="SM00409">
    <property type="entry name" value="IG"/>
    <property type="match status" value="1"/>
</dbReference>
<dbReference type="SMART" id="SM00406">
    <property type="entry name" value="IGv"/>
    <property type="match status" value="1"/>
</dbReference>
<dbReference type="SUPFAM" id="SSF48726">
    <property type="entry name" value="Immunoglobulin"/>
    <property type="match status" value="1"/>
</dbReference>
<dbReference type="PROSITE" id="PS50835">
    <property type="entry name" value="IG_LIKE"/>
    <property type="match status" value="1"/>
</dbReference>
<name>KVD13_HUMAN</name>
<keyword id="KW-1064">Adaptive immunity</keyword>
<keyword id="KW-1003">Cell membrane</keyword>
<keyword id="KW-1015">Disulfide bond</keyword>
<keyword id="KW-0391">Immunity</keyword>
<keyword id="KW-1280">Immunoglobulin</keyword>
<keyword id="KW-0393">Immunoglobulin domain</keyword>
<keyword id="KW-0472">Membrane</keyword>
<keyword id="KW-1185">Reference proteome</keyword>
<keyword id="KW-0964">Secreted</keyword>
<keyword id="KW-0732">Signal</keyword>
<protein>
    <recommendedName>
        <fullName evidence="4 9">Immunoglobulin kappa variable 1D-13</fullName>
    </recommendedName>
</protein>
<gene>
    <name evidence="4 9" type="primary">IGKV1D-13</name>
</gene>
<organism>
    <name type="scientific">Homo sapiens</name>
    <name type="common">Human</name>
    <dbReference type="NCBI Taxonomy" id="9606"/>
    <lineage>
        <taxon>Eukaryota</taxon>
        <taxon>Metazoa</taxon>
        <taxon>Chordata</taxon>
        <taxon>Craniata</taxon>
        <taxon>Vertebrata</taxon>
        <taxon>Euteleostomi</taxon>
        <taxon>Mammalia</taxon>
        <taxon>Eutheria</taxon>
        <taxon>Euarchontoglires</taxon>
        <taxon>Primates</taxon>
        <taxon>Haplorrhini</taxon>
        <taxon>Catarrhini</taxon>
        <taxon>Hominidae</taxon>
        <taxon>Homo</taxon>
    </lineage>
</organism>
<reference key="1">
    <citation type="journal article" date="2005" name="Nature">
        <title>Generation and annotation of the DNA sequences of human chromosomes 2 and 4.</title>
        <authorList>
            <person name="Hillier L.W."/>
            <person name="Graves T.A."/>
            <person name="Fulton R.S."/>
            <person name="Fulton L.A."/>
            <person name="Pepin K.H."/>
            <person name="Minx P."/>
            <person name="Wagner-McPherson C."/>
            <person name="Layman D."/>
            <person name="Wylie K."/>
            <person name="Sekhon M."/>
            <person name="Becker M.C."/>
            <person name="Fewell G.A."/>
            <person name="Delehaunty K.D."/>
            <person name="Miner T.L."/>
            <person name="Nash W.E."/>
            <person name="Kremitzki C."/>
            <person name="Oddy L."/>
            <person name="Du H."/>
            <person name="Sun H."/>
            <person name="Bradshaw-Cordum H."/>
            <person name="Ali J."/>
            <person name="Carter J."/>
            <person name="Cordes M."/>
            <person name="Harris A."/>
            <person name="Isak A."/>
            <person name="van Brunt A."/>
            <person name="Nguyen C."/>
            <person name="Du F."/>
            <person name="Courtney L."/>
            <person name="Kalicki J."/>
            <person name="Ozersky P."/>
            <person name="Abbott S."/>
            <person name="Armstrong J."/>
            <person name="Belter E.A."/>
            <person name="Caruso L."/>
            <person name="Cedroni M."/>
            <person name="Cotton M."/>
            <person name="Davidson T."/>
            <person name="Desai A."/>
            <person name="Elliott G."/>
            <person name="Erb T."/>
            <person name="Fronick C."/>
            <person name="Gaige T."/>
            <person name="Haakenson W."/>
            <person name="Haglund K."/>
            <person name="Holmes A."/>
            <person name="Harkins R."/>
            <person name="Kim K."/>
            <person name="Kruchowski S.S."/>
            <person name="Strong C.M."/>
            <person name="Grewal N."/>
            <person name="Goyea E."/>
            <person name="Hou S."/>
            <person name="Levy A."/>
            <person name="Martinka S."/>
            <person name="Mead K."/>
            <person name="McLellan M.D."/>
            <person name="Meyer R."/>
            <person name="Randall-Maher J."/>
            <person name="Tomlinson C."/>
            <person name="Dauphin-Kohlberg S."/>
            <person name="Kozlowicz-Reilly A."/>
            <person name="Shah N."/>
            <person name="Swearengen-Shahid S."/>
            <person name="Snider J."/>
            <person name="Strong J.T."/>
            <person name="Thompson J."/>
            <person name="Yoakum M."/>
            <person name="Leonard S."/>
            <person name="Pearman C."/>
            <person name="Trani L."/>
            <person name="Radionenko M."/>
            <person name="Waligorski J.E."/>
            <person name="Wang C."/>
            <person name="Rock S.M."/>
            <person name="Tin-Wollam A.-M."/>
            <person name="Maupin R."/>
            <person name="Latreille P."/>
            <person name="Wendl M.C."/>
            <person name="Yang S.-P."/>
            <person name="Pohl C."/>
            <person name="Wallis J.W."/>
            <person name="Spieth J."/>
            <person name="Bieri T.A."/>
            <person name="Berkowicz N."/>
            <person name="Nelson J.O."/>
            <person name="Osborne J."/>
            <person name="Ding L."/>
            <person name="Meyer R."/>
            <person name="Sabo A."/>
            <person name="Shotland Y."/>
            <person name="Sinha P."/>
            <person name="Wohldmann P.E."/>
            <person name="Cook L.L."/>
            <person name="Hickenbotham M.T."/>
            <person name="Eldred J."/>
            <person name="Williams D."/>
            <person name="Jones T.A."/>
            <person name="She X."/>
            <person name="Ciccarelli F.D."/>
            <person name="Izaurralde E."/>
            <person name="Taylor J."/>
            <person name="Schmutz J."/>
            <person name="Myers R.M."/>
            <person name="Cox D.R."/>
            <person name="Huang X."/>
            <person name="McPherson J.D."/>
            <person name="Mardis E.R."/>
            <person name="Clifton S.W."/>
            <person name="Warren W.C."/>
            <person name="Chinwalla A.T."/>
            <person name="Eddy S.R."/>
            <person name="Marra M.A."/>
            <person name="Ovcharenko I."/>
            <person name="Furey T.S."/>
            <person name="Miller W."/>
            <person name="Eichler E.E."/>
            <person name="Bork P."/>
            <person name="Suyama M."/>
            <person name="Torrents D."/>
            <person name="Waterston R.H."/>
            <person name="Wilson R.K."/>
        </authorList>
    </citation>
    <scope>NUCLEOTIDE SEQUENCE [LARGE SCALE GENOMIC DNA] (IMGT ALLELE IGKV1D-13*02)</scope>
</reference>
<reference key="2">
    <citation type="journal article" date="2001" name="Exp. Clin. Immunogenet.">
        <title>Nomenclature of the human immunoglobulin kappa (IGK) genes.</title>
        <authorList>
            <person name="Lefranc M.P."/>
        </authorList>
    </citation>
    <scope>NOMEMCLATURE</scope>
</reference>
<reference key="3">
    <citation type="book" date="2001" name="The Immunoglobulin FactsBook.">
        <title>The Immunoglobulin FactsBook.</title>
        <editorList>
            <person name="Lefranc M.P."/>
            <person name="Lefranc G."/>
        </editorList>
        <authorList>
            <person name="Lefranc M.P."/>
            <person name="Lefranc G."/>
        </authorList>
    </citation>
    <scope>NOMENCLATURE</scope>
</reference>
<reference key="4">
    <citation type="journal article" date="2007" name="Annu. Rev. Genet.">
        <title>Immunoglobulin somatic hypermutation.</title>
        <authorList>
            <person name="Teng G."/>
            <person name="Papavasiliou F.N."/>
        </authorList>
    </citation>
    <scope>REVIEW ON SOMATIC HYPERMUTATION</scope>
</reference>
<reference key="5">
    <citation type="journal article" date="2010" name="J. Allergy Clin. Immunol.">
        <title>Structure and function of immunoglobulins.</title>
        <authorList>
            <person name="Schroeder H.W. Jr."/>
            <person name="Cavacini L."/>
        </authorList>
    </citation>
    <scope>REVIEW ON IMMUNOGLOBULINS</scope>
</reference>
<reference key="6">
    <citation type="journal article" date="2012" name="Nat. Rev. Immunol.">
        <title>Molecular programming of B cell memory.</title>
        <authorList>
            <person name="McHeyzer-Williams M."/>
            <person name="Okitsu S."/>
            <person name="Wang N."/>
            <person name="McHeyzer-Williams L."/>
        </authorList>
    </citation>
    <scope>REVIEW ON FUNCTION</scope>
</reference>
<reference key="7">
    <citation type="journal article" date="2014" name="Front. Immunol.">
        <title>Immunoglobulin and T Cell Receptor Genes: IMGT((R)) and the Birth and Rise of Immunoinformatics.</title>
        <authorList>
            <person name="Lefranc M.P."/>
        </authorList>
    </citation>
    <scope>NOMENCLATURE</scope>
</reference>